<dbReference type="EMBL" id="DQ517337">
    <property type="protein sequence ID" value="ABF70663.1"/>
    <property type="molecule type" value="Genomic_DNA"/>
</dbReference>
<dbReference type="RefSeq" id="YP_803369.1">
    <property type="nucleotide sequence ID" value="NC_008518.1"/>
</dbReference>
<dbReference type="SMR" id="Q06VD6"/>
<dbReference type="KEGG" id="vg:5141723"/>
<dbReference type="Proteomes" id="UP000001323">
    <property type="component" value="Genome"/>
</dbReference>
<dbReference type="GO" id="GO:0044423">
    <property type="term" value="C:virion component"/>
    <property type="evidence" value="ECO:0007669"/>
    <property type="project" value="UniProtKB-KW"/>
</dbReference>
<dbReference type="PANTHER" id="PTHR23159">
    <property type="entry name" value="CENTROSOMAL PROTEIN 2"/>
    <property type="match status" value="1"/>
</dbReference>
<dbReference type="PANTHER" id="PTHR23159:SF31">
    <property type="entry name" value="CENTROSOME-ASSOCIATED PROTEIN CEP250 ISOFORM X1"/>
    <property type="match status" value="1"/>
</dbReference>
<accession>Q06VD6</accession>
<organismHost>
    <name type="scientific">Noctuidae</name>
    <name type="common">owlet moths</name>
    <dbReference type="NCBI Taxonomy" id="7100"/>
</organismHost>
<name>Y147_TNAVC</name>
<proteinExistence type="evidence at protein level"/>
<gene>
    <name type="ORF">ORF147</name>
</gene>
<sequence length="1481" mass="173372">MLHINMHIIDIGINTKMKPTPRHIHMIVKSNYTNMELERNTFSSNMNVMKDELNEMRRKLELHEAEKRAEITKGSQKKSNSSSSENLEKDNAIKSLRSQLNSVKVVNEQLKFNIRELQNSHSITIKKLEQIHRDNLTSVEISFANNIEKYKSRIDELTRVNGELTKINATLSVAGPSASPLRKSGDDQRSYNRYTTNDINKLNRDRNQWLRELNIIRSENGELKRQIDSLNKLLEKSRNEIKQIRSKYNSLETQKDYENGDLFAGMEENLDAAVSRCKELFDEKLRLENDIQRLMEEGAMNRDKIHRQNYDIEKLKNTIQENLDKQFDLINNGYRYDDDDDDNCSGGVAVLKSRITNLESQIIELSADIEYRDGNIASLEKERDDLKQKYNNEKRNSRNASDGVAKLKINMKKSELERDKFREKCLKSDNIIMELKRQLEINNVDLERIRDERNEYQEKVKFLDAEILTNRNKFEEQTNALNNMLRQYSRRSINNSNPSLNDTRKLHMQLQLQIETLNNQLDTVKSERKIVLEEVIRLNHQIDTLKQIYQCSMQNTTILCRNYVKNSDSKLEYLLNSHRDELKEYQDMLNISEAKLIQSEKQYQQLMADNSSAATEMRALEKRLASEMNRYQEELSQKDAIISQLKSVIEPMQREIENLNTSRRNLQYNINNTTNDSELTTSSSSSNNMLLYDKIKQLENELNRYKESERAWRNERDLLVSKMRNTVGANDLSLQSRIRTLEMDNKNLRENLQANNSTIANERANYIQQLDKLNEEIDMNNREMGKLQVEIASLNNQLNASNVLNESQIEKINRQNEELNSNLTEINALRDELNKRESDILVANRELNVLRRRVEKYKSSTTPSSEEKLTTPKRMQYVKTIKTLRKEIADNKRQIKNLIRDRSQNDDHINQLRVNDQLLNVINSLKNQIRESNGEIKMYERKLYESNRQNVKLNDNMKRVVGENESLNNRIKSIYNNYDKQIAEIGEEVAKKNELIKILTLSVENIESNNEDVRGDGVNTTNFFKNLLVTTIRERNDLDRKVQELQSEVFINKSRLSECQATMVQLNNDLTMRVEENKNLERVIVELRERISNNESKLQELQLEDGGRMTRIPEYDDENIRNYRLRLQQAQNIIKNNQNELSRLKNVDNDLRELRKKLLSQSGKEDNDNHISQELQNAMTQLDYSKNIIEEHVEQIQQLTAKNEDTERALNELQGDMRALEVDRSNILTENASLNDELTSMKDDIDIMQRKFTQLQNDYYSTSRELELEKEERFKCNATNVEIKQELRTLKSELLRLQKQCGGIKKCATKLQESIISGDEKLSSTVSSSSSSSPKTTTKRKRNNDDNTNDDYNNRKKVHLSKSTSRSPKRNLKRKEINNDNDASTSKNRRSSSSRTTITPPIPRSRALRLSASSIEDLKIDSKRQRLLNAGIVQDTELTDEEYDENFDRNLLSDDDTEEDIMRKRILSNPKYEFLNNTYNG</sequence>
<reference key="1">
    <citation type="journal article" date="2006" name="Virology">
        <title>Sequence and organization of the Trichoplusia ni ascovirus 2c (Ascoviridae) genome.</title>
        <authorList>
            <person name="Wang L."/>
            <person name="Xue J."/>
            <person name="Seaborn C.P."/>
            <person name="Arif B.M."/>
            <person name="Cheng X.W."/>
        </authorList>
    </citation>
    <scope>NUCLEOTIDE SEQUENCE [LARGE SCALE GENOMIC DNA]</scope>
</reference>
<reference key="2">
    <citation type="journal article" date="2007" name="J. Gen. Virol.">
        <title>Identification of Trichoplusia ni ascovirus 2c virion structural proteins.</title>
        <authorList>
            <person name="Cui L."/>
            <person name="Cheng X."/>
            <person name="Li L."/>
            <person name="Li J."/>
        </authorList>
    </citation>
    <scope>IDENTIFICATION BY MASS SPECTROMETRY</scope>
</reference>
<protein>
    <recommendedName>
        <fullName>Structural protein ORF147</fullName>
    </recommendedName>
</protein>
<feature type="chain" id="PRO_0000330592" description="Structural protein ORF147">
    <location>
        <begin position="1"/>
        <end position="1481"/>
    </location>
</feature>
<feature type="region of interest" description="Disordered" evidence="1">
    <location>
        <begin position="65"/>
        <end position="88"/>
    </location>
</feature>
<feature type="region of interest" description="Disordered" evidence="1">
    <location>
        <begin position="1319"/>
        <end position="1403"/>
    </location>
</feature>
<feature type="compositionally biased region" description="Low complexity" evidence="1">
    <location>
        <begin position="73"/>
        <end position="84"/>
    </location>
</feature>
<feature type="compositionally biased region" description="Low complexity" evidence="1">
    <location>
        <begin position="1323"/>
        <end position="1336"/>
    </location>
</feature>
<feature type="compositionally biased region" description="Low complexity" evidence="1">
    <location>
        <begin position="1393"/>
        <end position="1403"/>
    </location>
</feature>
<organism>
    <name type="scientific">Trichoplusia ni ascovirus 2c</name>
    <name type="common">TnAV-2c</name>
    <dbReference type="NCBI Taxonomy" id="328615"/>
    <lineage>
        <taxon>Viruses</taxon>
        <taxon>Varidnaviria</taxon>
        <taxon>Bamfordvirae</taxon>
        <taxon>Nucleocytoviricota</taxon>
        <taxon>Megaviricetes</taxon>
        <taxon>Pimascovirales</taxon>
        <taxon>Ascoviridae</taxon>
        <taxon>Ascovirus</taxon>
    </lineage>
</organism>
<comment type="subcellular location">
    <subcellularLocation>
        <location>Virion</location>
    </subcellularLocation>
</comment>
<keyword id="KW-1185">Reference proteome</keyword>
<keyword id="KW-0677">Repeat</keyword>
<keyword id="KW-0946">Virion</keyword>
<evidence type="ECO:0000256" key="1">
    <source>
        <dbReference type="SAM" id="MobiDB-lite"/>
    </source>
</evidence>